<dbReference type="EMBL" id="AAFW02000011">
    <property type="protein sequence ID" value="EDN64657.1"/>
    <property type="molecule type" value="Genomic_DNA"/>
</dbReference>
<dbReference type="SMR" id="A6ZKY8"/>
<dbReference type="HOGENOM" id="CLU_485763_0_0_1"/>
<dbReference type="Proteomes" id="UP000007060">
    <property type="component" value="Unassembled WGS sequence"/>
</dbReference>
<dbReference type="GO" id="GO:0005743">
    <property type="term" value="C:mitochondrial inner membrane"/>
    <property type="evidence" value="ECO:0007669"/>
    <property type="project" value="UniProtKB-SubCell"/>
</dbReference>
<dbReference type="GO" id="GO:0005524">
    <property type="term" value="F:ATP binding"/>
    <property type="evidence" value="ECO:0007669"/>
    <property type="project" value="UniProtKB-KW"/>
</dbReference>
<dbReference type="GO" id="GO:0140662">
    <property type="term" value="F:ATP-dependent protein folding chaperone"/>
    <property type="evidence" value="ECO:0007669"/>
    <property type="project" value="InterPro"/>
</dbReference>
<dbReference type="GO" id="GO:0042026">
    <property type="term" value="P:protein refolding"/>
    <property type="evidence" value="ECO:0007669"/>
    <property type="project" value="InterPro"/>
</dbReference>
<dbReference type="Gene3D" id="3.50.7.10">
    <property type="entry name" value="GroEL"/>
    <property type="match status" value="1"/>
</dbReference>
<dbReference type="Gene3D" id="1.10.560.10">
    <property type="entry name" value="GroEL-like equatorial domain"/>
    <property type="match status" value="1"/>
</dbReference>
<dbReference type="Gene3D" id="3.30.260.10">
    <property type="entry name" value="TCP-1-like chaperonin intermediate domain"/>
    <property type="match status" value="1"/>
</dbReference>
<dbReference type="InterPro" id="IPR001844">
    <property type="entry name" value="Cpn60/GroEL"/>
</dbReference>
<dbReference type="InterPro" id="IPR027409">
    <property type="entry name" value="GroEL-like_apical_dom_sf"/>
</dbReference>
<dbReference type="InterPro" id="IPR027413">
    <property type="entry name" value="GROEL-like_equatorial_sf"/>
</dbReference>
<dbReference type="InterPro" id="IPR027410">
    <property type="entry name" value="TCP-1-like_intermed_sf"/>
</dbReference>
<dbReference type="PANTHER" id="PTHR45633">
    <property type="entry name" value="60 KDA HEAT SHOCK PROTEIN, MITOCHONDRIAL"/>
    <property type="match status" value="1"/>
</dbReference>
<dbReference type="SUPFAM" id="SSF52029">
    <property type="entry name" value="GroEL apical domain-like"/>
    <property type="match status" value="1"/>
</dbReference>
<protein>
    <recommendedName>
        <fullName>Mitochondrial chaperone TCM62</fullName>
    </recommendedName>
</protein>
<comment type="function">
    <text evidence="1">Chaperone. Required for the assembly of succinate dehydrogenase subunits. Ensures mitochondrial gene expression at elevated temperatures and prevents heat-aggregation of the ribosomal subunit VAR1 (By similarity).</text>
</comment>
<comment type="subunit">
    <text evidence="1">Forms a high molecular mass protein complex of approximately 850 kDa.</text>
</comment>
<comment type="subcellular location">
    <subcellularLocation>
        <location evidence="1">Mitochondrion inner membrane</location>
        <topology evidence="1">Single-pass membrane protein</topology>
        <orientation evidence="1">Matrix side</orientation>
    </subcellularLocation>
</comment>
<comment type="similarity">
    <text evidence="3">Belongs to the chaperonin (HSP60) family.</text>
</comment>
<keyword id="KW-0067">ATP-binding</keyword>
<keyword id="KW-0143">Chaperone</keyword>
<keyword id="KW-0472">Membrane</keyword>
<keyword id="KW-0496">Mitochondrion</keyword>
<keyword id="KW-0999">Mitochondrion inner membrane</keyword>
<keyword id="KW-0547">Nucleotide-binding</keyword>
<keyword id="KW-0346">Stress response</keyword>
<keyword id="KW-0809">Transit peptide</keyword>
<keyword id="KW-0812">Transmembrane</keyword>
<keyword id="KW-1133">Transmembrane helix</keyword>
<reference key="1">
    <citation type="journal article" date="2007" name="Proc. Natl. Acad. Sci. U.S.A.">
        <title>Genome sequencing and comparative analysis of Saccharomyces cerevisiae strain YJM789.</title>
        <authorList>
            <person name="Wei W."/>
            <person name="McCusker J.H."/>
            <person name="Hyman R.W."/>
            <person name="Jones T."/>
            <person name="Ning Y."/>
            <person name="Cao Z."/>
            <person name="Gu Z."/>
            <person name="Bruno D."/>
            <person name="Miranda M."/>
            <person name="Nguyen M."/>
            <person name="Wilhelmy J."/>
            <person name="Komp C."/>
            <person name="Tamse R."/>
            <person name="Wang X."/>
            <person name="Jia P."/>
            <person name="Luedi P."/>
            <person name="Oefner P.J."/>
            <person name="David L."/>
            <person name="Dietrich F.S."/>
            <person name="Li Y."/>
            <person name="Davis R.W."/>
            <person name="Steinmetz L.M."/>
        </authorList>
    </citation>
    <scope>NUCLEOTIDE SEQUENCE [LARGE SCALE GENOMIC DNA]</scope>
    <source>
        <strain>YJM789</strain>
    </source>
</reference>
<feature type="transit peptide" description="Mitochondrion" evidence="2">
    <location>
        <begin position="1"/>
        <end position="16"/>
    </location>
</feature>
<feature type="chain" id="PRO_0000377650" description="Mitochondrial chaperone TCM62">
    <location>
        <begin position="17"/>
        <end position="572"/>
    </location>
</feature>
<feature type="topological domain" description="Mitochondrial matrix" evidence="2">
    <location>
        <begin position="17"/>
        <end position="471"/>
    </location>
</feature>
<feature type="transmembrane region" description="Helical" evidence="2">
    <location>
        <begin position="472"/>
        <end position="488"/>
    </location>
</feature>
<feature type="topological domain" description="Mitochondrial intermembrane" evidence="2">
    <location>
        <begin position="489"/>
        <end position="572"/>
    </location>
</feature>
<sequence length="572" mass="64266">MLRNCLRKLGNHQTKCSVKTLHTPIYRTKNLQVLRDTLSGIKLLEKIITSSSYNKTLIYEPKYKSKPQVVSSHDTMRLHNVMRELLDSLQVDEATNTRLQSNRPRKLGRVGLQLFMDCIQDNLTATSTSLTCSLLEHYFKYPEKEVTNGIKAGLRYIRDFLAKNKIIVKSQNDVDALVEQLTMSSSDSQSIKRVLKAINYELFSDDIVRVINGNKTYDEVDVSKGWKYPAGILDSNEAYLRSLELPTKKLVSIDKDMLVLMYDGTLRDANKILPTITYARKLRKSILLIVNGDCTGDALTSVTINNNRNKRENNESRIVVLKYSKKANNDLAPQENLDFIKFLRLPCGYDSIYSPEYSPLVPSKMCADKYYGSIESIKATTGEAFLYNSIDAEAIPNKVPKSFLQNTVTLSIGGHNEIEIDRRRNAIDNCLNNVLCHGLAKGFIPGYGISLLKAIPGLNELKANEPNFMTKVGINAVLSAVILPSEVAFKNAYGYNYYEINSLIAGAINEKSFPMAKFSPNSEPVNTVKDGNLEPWSKMDSCLAGVETFIELLTSCNTIITCVYKKPERHKA</sequence>
<proteinExistence type="inferred from homology"/>
<gene>
    <name type="primary">TCM62</name>
    <name type="ORF">SCY_0258</name>
</gene>
<name>TCM62_YEAS7</name>
<evidence type="ECO:0000250" key="1"/>
<evidence type="ECO:0000255" key="2"/>
<evidence type="ECO:0000305" key="3"/>
<accession>A6ZKY8</accession>
<organism>
    <name type="scientific">Saccharomyces cerevisiae (strain YJM789)</name>
    <name type="common">Baker's yeast</name>
    <dbReference type="NCBI Taxonomy" id="307796"/>
    <lineage>
        <taxon>Eukaryota</taxon>
        <taxon>Fungi</taxon>
        <taxon>Dikarya</taxon>
        <taxon>Ascomycota</taxon>
        <taxon>Saccharomycotina</taxon>
        <taxon>Saccharomycetes</taxon>
        <taxon>Saccharomycetales</taxon>
        <taxon>Saccharomycetaceae</taxon>
        <taxon>Saccharomyces</taxon>
    </lineage>
</organism>